<dbReference type="EC" id="7.1.2.2" evidence="2"/>
<dbReference type="EMBL" id="CP000157">
    <property type="protein sequence ID" value="ABC63846.1"/>
    <property type="molecule type" value="Genomic_DNA"/>
</dbReference>
<dbReference type="RefSeq" id="WP_011414676.1">
    <property type="nucleotide sequence ID" value="NC_007722.1"/>
</dbReference>
<dbReference type="SMR" id="Q2N8Z5"/>
<dbReference type="STRING" id="314225.ELI_08770"/>
<dbReference type="KEGG" id="eli:ELI_08770"/>
<dbReference type="eggNOG" id="COG0056">
    <property type="taxonomic scope" value="Bacteria"/>
</dbReference>
<dbReference type="HOGENOM" id="CLU_010091_2_1_5"/>
<dbReference type="OrthoDB" id="9803053at2"/>
<dbReference type="Proteomes" id="UP000008808">
    <property type="component" value="Chromosome"/>
</dbReference>
<dbReference type="GO" id="GO:0005886">
    <property type="term" value="C:plasma membrane"/>
    <property type="evidence" value="ECO:0007669"/>
    <property type="project" value="UniProtKB-SubCell"/>
</dbReference>
<dbReference type="GO" id="GO:0045259">
    <property type="term" value="C:proton-transporting ATP synthase complex"/>
    <property type="evidence" value="ECO:0007669"/>
    <property type="project" value="UniProtKB-KW"/>
</dbReference>
<dbReference type="GO" id="GO:0043531">
    <property type="term" value="F:ADP binding"/>
    <property type="evidence" value="ECO:0007669"/>
    <property type="project" value="TreeGrafter"/>
</dbReference>
<dbReference type="GO" id="GO:0005524">
    <property type="term" value="F:ATP binding"/>
    <property type="evidence" value="ECO:0007669"/>
    <property type="project" value="UniProtKB-UniRule"/>
</dbReference>
<dbReference type="GO" id="GO:0046933">
    <property type="term" value="F:proton-transporting ATP synthase activity, rotational mechanism"/>
    <property type="evidence" value="ECO:0007669"/>
    <property type="project" value="UniProtKB-UniRule"/>
</dbReference>
<dbReference type="CDD" id="cd18113">
    <property type="entry name" value="ATP-synt_F1_alpha_C"/>
    <property type="match status" value="1"/>
</dbReference>
<dbReference type="CDD" id="cd18116">
    <property type="entry name" value="ATP-synt_F1_alpha_N"/>
    <property type="match status" value="1"/>
</dbReference>
<dbReference type="CDD" id="cd01132">
    <property type="entry name" value="F1-ATPase_alpha_CD"/>
    <property type="match status" value="1"/>
</dbReference>
<dbReference type="FunFam" id="1.20.150.20:FF:000001">
    <property type="entry name" value="ATP synthase subunit alpha"/>
    <property type="match status" value="1"/>
</dbReference>
<dbReference type="FunFam" id="2.40.30.20:FF:000001">
    <property type="entry name" value="ATP synthase subunit alpha"/>
    <property type="match status" value="1"/>
</dbReference>
<dbReference type="FunFam" id="3.40.50.300:FF:002432">
    <property type="entry name" value="ATP synthase subunit alpha, mitochondrial"/>
    <property type="match status" value="1"/>
</dbReference>
<dbReference type="Gene3D" id="2.40.30.20">
    <property type="match status" value="1"/>
</dbReference>
<dbReference type="Gene3D" id="1.20.150.20">
    <property type="entry name" value="ATP synthase alpha/beta chain, C-terminal domain"/>
    <property type="match status" value="1"/>
</dbReference>
<dbReference type="Gene3D" id="3.40.50.300">
    <property type="entry name" value="P-loop containing nucleotide triphosphate hydrolases"/>
    <property type="match status" value="1"/>
</dbReference>
<dbReference type="HAMAP" id="MF_01346">
    <property type="entry name" value="ATP_synth_alpha_bact"/>
    <property type="match status" value="1"/>
</dbReference>
<dbReference type="InterPro" id="IPR023366">
    <property type="entry name" value="ATP_synth_asu-like_sf"/>
</dbReference>
<dbReference type="InterPro" id="IPR000793">
    <property type="entry name" value="ATP_synth_asu_C"/>
</dbReference>
<dbReference type="InterPro" id="IPR038376">
    <property type="entry name" value="ATP_synth_asu_C_sf"/>
</dbReference>
<dbReference type="InterPro" id="IPR033732">
    <property type="entry name" value="ATP_synth_F1_a_nt-bd_dom"/>
</dbReference>
<dbReference type="InterPro" id="IPR005294">
    <property type="entry name" value="ATP_synth_F1_asu"/>
</dbReference>
<dbReference type="InterPro" id="IPR020003">
    <property type="entry name" value="ATPase_a/bsu_AS"/>
</dbReference>
<dbReference type="InterPro" id="IPR004100">
    <property type="entry name" value="ATPase_F1/V1/A1_a/bsu_N"/>
</dbReference>
<dbReference type="InterPro" id="IPR036121">
    <property type="entry name" value="ATPase_F1/V1/A1_a/bsu_N_sf"/>
</dbReference>
<dbReference type="InterPro" id="IPR000194">
    <property type="entry name" value="ATPase_F1/V1/A1_a/bsu_nucl-bd"/>
</dbReference>
<dbReference type="InterPro" id="IPR027417">
    <property type="entry name" value="P-loop_NTPase"/>
</dbReference>
<dbReference type="NCBIfam" id="TIGR00962">
    <property type="entry name" value="atpA"/>
    <property type="match status" value="1"/>
</dbReference>
<dbReference type="NCBIfam" id="NF009884">
    <property type="entry name" value="PRK13343.1"/>
    <property type="match status" value="1"/>
</dbReference>
<dbReference type="PANTHER" id="PTHR48082">
    <property type="entry name" value="ATP SYNTHASE SUBUNIT ALPHA, MITOCHONDRIAL"/>
    <property type="match status" value="1"/>
</dbReference>
<dbReference type="PANTHER" id="PTHR48082:SF2">
    <property type="entry name" value="ATP SYNTHASE SUBUNIT ALPHA, MITOCHONDRIAL"/>
    <property type="match status" value="1"/>
</dbReference>
<dbReference type="Pfam" id="PF00006">
    <property type="entry name" value="ATP-synt_ab"/>
    <property type="match status" value="1"/>
</dbReference>
<dbReference type="Pfam" id="PF00306">
    <property type="entry name" value="ATP-synt_ab_C"/>
    <property type="match status" value="1"/>
</dbReference>
<dbReference type="Pfam" id="PF02874">
    <property type="entry name" value="ATP-synt_ab_N"/>
    <property type="match status" value="1"/>
</dbReference>
<dbReference type="PIRSF" id="PIRSF039088">
    <property type="entry name" value="F_ATPase_subunit_alpha"/>
    <property type="match status" value="1"/>
</dbReference>
<dbReference type="SUPFAM" id="SSF47917">
    <property type="entry name" value="C-terminal domain of alpha and beta subunits of F1 ATP synthase"/>
    <property type="match status" value="1"/>
</dbReference>
<dbReference type="SUPFAM" id="SSF50615">
    <property type="entry name" value="N-terminal domain of alpha and beta subunits of F1 ATP synthase"/>
    <property type="match status" value="1"/>
</dbReference>
<dbReference type="SUPFAM" id="SSF52540">
    <property type="entry name" value="P-loop containing nucleoside triphosphate hydrolases"/>
    <property type="match status" value="1"/>
</dbReference>
<dbReference type="PROSITE" id="PS00152">
    <property type="entry name" value="ATPASE_ALPHA_BETA"/>
    <property type="match status" value="1"/>
</dbReference>
<accession>Q2N8Z5</accession>
<keyword id="KW-0066">ATP synthesis</keyword>
<keyword id="KW-0067">ATP-binding</keyword>
<keyword id="KW-0997">Cell inner membrane</keyword>
<keyword id="KW-1003">Cell membrane</keyword>
<keyword id="KW-0139">CF(1)</keyword>
<keyword id="KW-0375">Hydrogen ion transport</keyword>
<keyword id="KW-0406">Ion transport</keyword>
<keyword id="KW-0472">Membrane</keyword>
<keyword id="KW-0547">Nucleotide-binding</keyword>
<keyword id="KW-1185">Reference proteome</keyword>
<keyword id="KW-1278">Translocase</keyword>
<keyword id="KW-0813">Transport</keyword>
<protein>
    <recommendedName>
        <fullName evidence="2">ATP synthase subunit alpha</fullName>
        <ecNumber evidence="2">7.1.2.2</ecNumber>
    </recommendedName>
    <alternativeName>
        <fullName evidence="2">ATP synthase F1 sector subunit alpha</fullName>
    </alternativeName>
    <alternativeName>
        <fullName evidence="2">F-ATPase subunit alpha</fullName>
    </alternativeName>
</protein>
<name>ATPA_ERYLH</name>
<proteinExistence type="inferred from homology"/>
<gene>
    <name evidence="2" type="primary">atpA</name>
    <name type="ordered locus">ELI_08770</name>
</gene>
<feature type="chain" id="PRO_0000302645" description="ATP synthase subunit alpha">
    <location>
        <begin position="1"/>
        <end position="509"/>
    </location>
</feature>
<feature type="binding site" evidence="2">
    <location>
        <begin position="169"/>
        <end position="176"/>
    </location>
    <ligand>
        <name>ATP</name>
        <dbReference type="ChEBI" id="CHEBI:30616"/>
    </ligand>
</feature>
<feature type="site" description="Required for activity" evidence="2">
    <location>
        <position position="370"/>
    </location>
</feature>
<sequence length="509" mass="54951">MDIRAAEISKVIKDQIANFGTEAQVSEVGSVLSVGDGIARIHGLDNVQAGEMVEFANGVQGMALNLEADNVGVVIFGSDAEIKEGDNVKRTETIVDVPVGKALLGRVVDALGNPIDGKGPIETTERRRVELKAPGIIPRKSVDEPVQSGLKAIDALVPVGRGQRELIIGDRQTGKTAVAIDTFINQKTVNESDDESKKLYCVYVAVGQKRSTVAQIVKSLEENGAMEYSIVVAATASEPAPLQYLAPYTGCAMGEFFRDNGMHAVIVYDDLSKQAVAYRQMSLLLRRPPGREAYPGDVFYLHSRLLERAAKMNDDNGGGSLTALPIIETQAGDVSAYIPTNVISITDGQIFLETDLFYQGVRPAINVGLSVSRVGGAAQTKAMKKVSGSIKLELAQYREMAAFAQFGSDLDASTQKLLNRGARLTELLKQPQFSPMPFEEQTVSIFAGTNGYIDDVAVDRVTEYESQMLSFMRSEHADILKTIRDTGKFEDDTKAATVAALDAFAKQFA</sequence>
<comment type="function">
    <text evidence="2">Produces ATP from ADP in the presence of a proton gradient across the membrane. The alpha chain is a regulatory subunit.</text>
</comment>
<comment type="catalytic activity">
    <reaction evidence="2">
        <text>ATP + H2O + 4 H(+)(in) = ADP + phosphate + 5 H(+)(out)</text>
        <dbReference type="Rhea" id="RHEA:57720"/>
        <dbReference type="ChEBI" id="CHEBI:15377"/>
        <dbReference type="ChEBI" id="CHEBI:15378"/>
        <dbReference type="ChEBI" id="CHEBI:30616"/>
        <dbReference type="ChEBI" id="CHEBI:43474"/>
        <dbReference type="ChEBI" id="CHEBI:456216"/>
        <dbReference type="EC" id="7.1.2.2"/>
    </reaction>
</comment>
<comment type="subunit">
    <text evidence="1">F-type ATPases have 2 components, CF(1) - the catalytic core - and CF(0) - the membrane proton channel. CF(1) has five subunits: alpha(3), beta(3), gamma(1), delta(1), epsilon(1). CF(0) has four main subunits: a(1), b(1), b'(1) and c(9-12) (By similarity).</text>
</comment>
<comment type="subcellular location">
    <subcellularLocation>
        <location evidence="2">Cell inner membrane</location>
        <topology evidence="2">Peripheral membrane protein</topology>
    </subcellularLocation>
</comment>
<comment type="similarity">
    <text evidence="2">Belongs to the ATPase alpha/beta chains family.</text>
</comment>
<reference key="1">
    <citation type="journal article" date="2009" name="J. Bacteriol.">
        <title>Complete genome sequence of Erythrobacter litoralis HTCC2594.</title>
        <authorList>
            <person name="Oh H.M."/>
            <person name="Giovannoni S.J."/>
            <person name="Ferriera S."/>
            <person name="Johnson J."/>
            <person name="Cho J.C."/>
        </authorList>
    </citation>
    <scope>NUCLEOTIDE SEQUENCE [LARGE SCALE GENOMIC DNA]</scope>
    <source>
        <strain>HTCC2594</strain>
    </source>
</reference>
<evidence type="ECO:0000250" key="1"/>
<evidence type="ECO:0000255" key="2">
    <source>
        <dbReference type="HAMAP-Rule" id="MF_01346"/>
    </source>
</evidence>
<organism>
    <name type="scientific">Erythrobacter litoralis (strain HTCC2594)</name>
    <dbReference type="NCBI Taxonomy" id="314225"/>
    <lineage>
        <taxon>Bacteria</taxon>
        <taxon>Pseudomonadati</taxon>
        <taxon>Pseudomonadota</taxon>
        <taxon>Alphaproteobacteria</taxon>
        <taxon>Sphingomonadales</taxon>
        <taxon>Erythrobacteraceae</taxon>
        <taxon>Erythrobacter/Porphyrobacter group</taxon>
        <taxon>Erythrobacter</taxon>
    </lineage>
</organism>